<dbReference type="EMBL" id="U91630">
    <property type="protein sequence ID" value="AAB51149.1"/>
    <property type="molecule type" value="mRNA"/>
</dbReference>
<dbReference type="RefSeq" id="NP_990474.1">
    <property type="nucleotide sequence ID" value="NM_205143.2"/>
</dbReference>
<dbReference type="SMR" id="P62758"/>
<dbReference type="BioGRID" id="676316">
    <property type="interactions" value="1"/>
</dbReference>
<dbReference type="FunCoup" id="P62758">
    <property type="interactions" value="291"/>
</dbReference>
<dbReference type="IntAct" id="P62758">
    <property type="interactions" value="1"/>
</dbReference>
<dbReference type="STRING" id="9031.ENSGALP00000044473"/>
<dbReference type="PaxDb" id="9031-ENSGALP00000021767"/>
<dbReference type="Ensembl" id="ENSGALT00010028410.1">
    <property type="protein sequence ID" value="ENSGALP00010016288.1"/>
    <property type="gene ID" value="ENSGALG00010011885.1"/>
</dbReference>
<dbReference type="GeneID" id="396048"/>
<dbReference type="KEGG" id="gga:396048"/>
<dbReference type="CTD" id="83988"/>
<dbReference type="VEuPathDB" id="HostDB:geneid_396048"/>
<dbReference type="eggNOG" id="KOG0044">
    <property type="taxonomic scope" value="Eukaryota"/>
</dbReference>
<dbReference type="GeneTree" id="ENSGT00940000158862"/>
<dbReference type="HOGENOM" id="CLU_072366_1_0_1"/>
<dbReference type="InParanoid" id="P62758"/>
<dbReference type="OMA" id="MGCVCMK"/>
<dbReference type="OrthoDB" id="191686at2759"/>
<dbReference type="PhylomeDB" id="P62758"/>
<dbReference type="TreeFam" id="TF300009"/>
<dbReference type="Reactome" id="R-GGA-451308">
    <property type="pathway name" value="Activation of Ca-permeable Kainate Receptor"/>
</dbReference>
<dbReference type="PRO" id="PR:P62758"/>
<dbReference type="Proteomes" id="UP000000539">
    <property type="component" value="Chromosome 2"/>
</dbReference>
<dbReference type="Bgee" id="ENSGALG00000032518">
    <property type="expression patterns" value="Expressed in brain and 14 other cell types or tissues"/>
</dbReference>
<dbReference type="GO" id="GO:0003779">
    <property type="term" value="F:actin binding"/>
    <property type="evidence" value="ECO:0000318"/>
    <property type="project" value="GO_Central"/>
</dbReference>
<dbReference type="GO" id="GO:0005509">
    <property type="term" value="F:calcium ion binding"/>
    <property type="evidence" value="ECO:0000318"/>
    <property type="project" value="GO_Central"/>
</dbReference>
<dbReference type="GO" id="GO:0015631">
    <property type="term" value="F:tubulin binding"/>
    <property type="evidence" value="ECO:0000318"/>
    <property type="project" value="GO_Central"/>
</dbReference>
<dbReference type="GO" id="GO:0019722">
    <property type="term" value="P:calcium-mediated signaling"/>
    <property type="evidence" value="ECO:0000318"/>
    <property type="project" value="GO_Central"/>
</dbReference>
<dbReference type="GO" id="GO:0009966">
    <property type="term" value="P:regulation of signal transduction"/>
    <property type="evidence" value="ECO:0000318"/>
    <property type="project" value="GO_Central"/>
</dbReference>
<dbReference type="CDD" id="cd00051">
    <property type="entry name" value="EFh"/>
    <property type="match status" value="2"/>
</dbReference>
<dbReference type="FunFam" id="1.10.238.10:FF:000009">
    <property type="entry name" value="Visinin-like protein 1"/>
    <property type="match status" value="1"/>
</dbReference>
<dbReference type="Gene3D" id="1.10.238.10">
    <property type="entry name" value="EF-hand"/>
    <property type="match status" value="1"/>
</dbReference>
<dbReference type="InterPro" id="IPR011992">
    <property type="entry name" value="EF-hand-dom_pair"/>
</dbReference>
<dbReference type="InterPro" id="IPR018247">
    <property type="entry name" value="EF_Hand_1_Ca_BS"/>
</dbReference>
<dbReference type="InterPro" id="IPR002048">
    <property type="entry name" value="EF_hand_dom"/>
</dbReference>
<dbReference type="InterPro" id="IPR028846">
    <property type="entry name" value="Recoverin"/>
</dbReference>
<dbReference type="PANTHER" id="PTHR23055">
    <property type="entry name" value="CALCIUM BINDING PROTEINS"/>
    <property type="match status" value="1"/>
</dbReference>
<dbReference type="PANTHER" id="PTHR23055:SF87">
    <property type="entry name" value="NEUROCALCIN-DELTA"/>
    <property type="match status" value="1"/>
</dbReference>
<dbReference type="Pfam" id="PF00036">
    <property type="entry name" value="EF-hand_1"/>
    <property type="match status" value="1"/>
</dbReference>
<dbReference type="Pfam" id="PF13499">
    <property type="entry name" value="EF-hand_7"/>
    <property type="match status" value="1"/>
</dbReference>
<dbReference type="PRINTS" id="PR00450">
    <property type="entry name" value="RECOVERIN"/>
</dbReference>
<dbReference type="SMART" id="SM00054">
    <property type="entry name" value="EFh"/>
    <property type="match status" value="3"/>
</dbReference>
<dbReference type="SUPFAM" id="SSF47473">
    <property type="entry name" value="EF-hand"/>
    <property type="match status" value="1"/>
</dbReference>
<dbReference type="PROSITE" id="PS00018">
    <property type="entry name" value="EF_HAND_1"/>
    <property type="match status" value="3"/>
</dbReference>
<dbReference type="PROSITE" id="PS50222">
    <property type="entry name" value="EF_HAND_2"/>
    <property type="match status" value="4"/>
</dbReference>
<evidence type="ECO:0000250" key="1"/>
<evidence type="ECO:0000255" key="2">
    <source>
        <dbReference type="PROSITE-ProRule" id="PRU00448"/>
    </source>
</evidence>
<evidence type="ECO:0000305" key="3"/>
<proteinExistence type="evidence at transcript level"/>
<feature type="initiator methionine" description="Removed" evidence="1">
    <location>
        <position position="1"/>
    </location>
</feature>
<feature type="chain" id="PRO_0000073784" description="Neurocalcin-delta">
    <location>
        <begin position="2"/>
        <end position="193"/>
    </location>
</feature>
<feature type="domain" description="EF-hand 1" evidence="2">
    <location>
        <begin position="40"/>
        <end position="58"/>
    </location>
</feature>
<feature type="domain" description="EF-hand 2" evidence="2">
    <location>
        <begin position="60"/>
        <end position="95"/>
    </location>
</feature>
<feature type="domain" description="EF-hand 3" evidence="2">
    <location>
        <begin position="96"/>
        <end position="131"/>
    </location>
</feature>
<feature type="domain" description="EF-hand 4" evidence="2">
    <location>
        <begin position="144"/>
        <end position="179"/>
    </location>
</feature>
<feature type="binding site" evidence="2">
    <location>
        <position position="73"/>
    </location>
    <ligand>
        <name>Ca(2+)</name>
        <dbReference type="ChEBI" id="CHEBI:29108"/>
        <label>1</label>
    </ligand>
</feature>
<feature type="binding site" evidence="2">
    <location>
        <position position="75"/>
    </location>
    <ligand>
        <name>Ca(2+)</name>
        <dbReference type="ChEBI" id="CHEBI:29108"/>
        <label>1</label>
    </ligand>
</feature>
<feature type="binding site" evidence="2">
    <location>
        <position position="77"/>
    </location>
    <ligand>
        <name>Ca(2+)</name>
        <dbReference type="ChEBI" id="CHEBI:29108"/>
        <label>1</label>
    </ligand>
</feature>
<feature type="binding site" evidence="2">
    <location>
        <position position="79"/>
    </location>
    <ligand>
        <name>Ca(2+)</name>
        <dbReference type="ChEBI" id="CHEBI:29108"/>
        <label>1</label>
    </ligand>
</feature>
<feature type="binding site" evidence="2">
    <location>
        <position position="84"/>
    </location>
    <ligand>
        <name>Ca(2+)</name>
        <dbReference type="ChEBI" id="CHEBI:29108"/>
        <label>1</label>
    </ligand>
</feature>
<feature type="binding site" evidence="2">
    <location>
        <position position="109"/>
    </location>
    <ligand>
        <name>Ca(2+)</name>
        <dbReference type="ChEBI" id="CHEBI:29108"/>
        <label>2</label>
    </ligand>
</feature>
<feature type="binding site" evidence="2">
    <location>
        <position position="111"/>
    </location>
    <ligand>
        <name>Ca(2+)</name>
        <dbReference type="ChEBI" id="CHEBI:29108"/>
        <label>2</label>
    </ligand>
</feature>
<feature type="binding site" evidence="2">
    <location>
        <position position="113"/>
    </location>
    <ligand>
        <name>Ca(2+)</name>
        <dbReference type="ChEBI" id="CHEBI:29108"/>
        <label>2</label>
    </ligand>
</feature>
<feature type="binding site" evidence="2">
    <location>
        <position position="115"/>
    </location>
    <ligand>
        <name>Ca(2+)</name>
        <dbReference type="ChEBI" id="CHEBI:29108"/>
        <label>2</label>
    </ligand>
</feature>
<feature type="binding site" evidence="2">
    <location>
        <position position="120"/>
    </location>
    <ligand>
        <name>Ca(2+)</name>
        <dbReference type="ChEBI" id="CHEBI:29108"/>
        <label>2</label>
    </ligand>
</feature>
<feature type="binding site" evidence="2">
    <location>
        <position position="157"/>
    </location>
    <ligand>
        <name>Ca(2+)</name>
        <dbReference type="ChEBI" id="CHEBI:29108"/>
        <label>3</label>
    </ligand>
</feature>
<feature type="binding site" evidence="2">
    <location>
        <position position="159"/>
    </location>
    <ligand>
        <name>Ca(2+)</name>
        <dbReference type="ChEBI" id="CHEBI:29108"/>
        <label>3</label>
    </ligand>
</feature>
<feature type="binding site" evidence="2">
    <location>
        <position position="161"/>
    </location>
    <ligand>
        <name>Ca(2+)</name>
        <dbReference type="ChEBI" id="CHEBI:29108"/>
        <label>3</label>
    </ligand>
</feature>
<feature type="binding site" evidence="2">
    <location>
        <position position="163"/>
    </location>
    <ligand>
        <name>Ca(2+)</name>
        <dbReference type="ChEBI" id="CHEBI:29108"/>
        <label>3</label>
    </ligand>
</feature>
<feature type="binding site" evidence="2">
    <location>
        <position position="168"/>
    </location>
    <ligand>
        <name>Ca(2+)</name>
        <dbReference type="ChEBI" id="CHEBI:29108"/>
        <label>3</label>
    </ligand>
</feature>
<feature type="lipid moiety-binding region" description="N-myristoyl glycine" evidence="1">
    <location>
        <position position="2"/>
    </location>
</feature>
<protein>
    <recommendedName>
        <fullName>Neurocalcin-delta</fullName>
    </recommendedName>
</protein>
<organism>
    <name type="scientific">Gallus gallus</name>
    <name type="common">Chicken</name>
    <dbReference type="NCBI Taxonomy" id="9031"/>
    <lineage>
        <taxon>Eukaryota</taxon>
        <taxon>Metazoa</taxon>
        <taxon>Chordata</taxon>
        <taxon>Craniata</taxon>
        <taxon>Vertebrata</taxon>
        <taxon>Euteleostomi</taxon>
        <taxon>Archelosauria</taxon>
        <taxon>Archosauria</taxon>
        <taxon>Dinosauria</taxon>
        <taxon>Saurischia</taxon>
        <taxon>Theropoda</taxon>
        <taxon>Coelurosauria</taxon>
        <taxon>Aves</taxon>
        <taxon>Neognathae</taxon>
        <taxon>Galloanserae</taxon>
        <taxon>Galliformes</taxon>
        <taxon>Phasianidae</taxon>
        <taxon>Phasianinae</taxon>
        <taxon>Gallus</taxon>
    </lineage>
</organism>
<reference key="1">
    <citation type="submission" date="1997-02" db="EMBL/GenBank/DDBJ databases">
        <authorList>
            <person name="Schonekess B.O."/>
            <person name="Walsh M.P."/>
        </authorList>
    </citation>
    <scope>NUCLEOTIDE SEQUENCE [MRNA]</scope>
    <source>
        <tissue>Gizzard</tissue>
    </source>
</reference>
<comment type="function">
    <text evidence="1">May be involved in the calcium-dependent regulation of rhodopsin phosphorylation. Binds three calcium ions (By similarity).</text>
</comment>
<comment type="similarity">
    <text evidence="3">Belongs to the recoverin family.</text>
</comment>
<name>NCALD_CHICK</name>
<gene>
    <name type="primary">NCALD</name>
</gene>
<sequence>MGKQNSKLRPEVMQDLLESTDFTEHEIQEWYKGFLRDCPSGHLSMEEFKKIYGNFFPYGDASKFAEHVFRTFDANGDGTIDFREFIIALSVTSRGKLEQKLKWAFSMYDLDGNGYISKSEMLEIVQAIYKMVSSVMKMPEDESTPEKRTEKIFRQMDTNRDGKLSLEEFIRGAKSDPSIVRLLQCDPSSAGQF</sequence>
<accession>P62758</accession>
<accession>O12953</accession>
<keyword id="KW-0106">Calcium</keyword>
<keyword id="KW-0449">Lipoprotein</keyword>
<keyword id="KW-0479">Metal-binding</keyword>
<keyword id="KW-0519">Myristate</keyword>
<keyword id="KW-1185">Reference proteome</keyword>
<keyword id="KW-0677">Repeat</keyword>